<accession>Q83LN2</accession>
<accession>Q7C283</accession>
<gene>
    <name evidence="1" type="primary">ssuB</name>
    <name type="ordered locus">SF0930</name>
    <name type="ordered locus">S0994</name>
</gene>
<organism>
    <name type="scientific">Shigella flexneri</name>
    <dbReference type="NCBI Taxonomy" id="623"/>
    <lineage>
        <taxon>Bacteria</taxon>
        <taxon>Pseudomonadati</taxon>
        <taxon>Pseudomonadota</taxon>
        <taxon>Gammaproteobacteria</taxon>
        <taxon>Enterobacterales</taxon>
        <taxon>Enterobacteriaceae</taxon>
        <taxon>Shigella</taxon>
    </lineage>
</organism>
<dbReference type="EC" id="7.6.2.14" evidence="1"/>
<dbReference type="EMBL" id="AE005674">
    <property type="protein sequence ID" value="AAN42559.1"/>
    <property type="molecule type" value="Genomic_DNA"/>
</dbReference>
<dbReference type="EMBL" id="AE014073">
    <property type="protein sequence ID" value="AAP16445.1"/>
    <property type="molecule type" value="Genomic_DNA"/>
</dbReference>
<dbReference type="RefSeq" id="NP_706852.1">
    <property type="nucleotide sequence ID" value="NC_004337.2"/>
</dbReference>
<dbReference type="RefSeq" id="WP_001090476.1">
    <property type="nucleotide sequence ID" value="NZ_WPGW01000157.1"/>
</dbReference>
<dbReference type="SMR" id="Q83LN2"/>
<dbReference type="STRING" id="198214.SF0930"/>
<dbReference type="PaxDb" id="198214-SF0930"/>
<dbReference type="GeneID" id="1023909"/>
<dbReference type="KEGG" id="sfl:SF0930"/>
<dbReference type="KEGG" id="sfx:S0994"/>
<dbReference type="PATRIC" id="fig|198214.7.peg.1083"/>
<dbReference type="HOGENOM" id="CLU_000604_1_22_6"/>
<dbReference type="Proteomes" id="UP000001006">
    <property type="component" value="Chromosome"/>
</dbReference>
<dbReference type="Proteomes" id="UP000002673">
    <property type="component" value="Chromosome"/>
</dbReference>
<dbReference type="GO" id="GO:0005886">
    <property type="term" value="C:plasma membrane"/>
    <property type="evidence" value="ECO:0007669"/>
    <property type="project" value="UniProtKB-SubCell"/>
</dbReference>
<dbReference type="GO" id="GO:0005524">
    <property type="term" value="F:ATP binding"/>
    <property type="evidence" value="ECO:0007669"/>
    <property type="project" value="UniProtKB-KW"/>
</dbReference>
<dbReference type="GO" id="GO:0016887">
    <property type="term" value="F:ATP hydrolysis activity"/>
    <property type="evidence" value="ECO:0007669"/>
    <property type="project" value="InterPro"/>
</dbReference>
<dbReference type="FunFam" id="3.40.50.300:FF:000653">
    <property type="entry name" value="Aliphatic sulfonates import ATP-binding protein SsuB"/>
    <property type="match status" value="1"/>
</dbReference>
<dbReference type="Gene3D" id="3.40.50.300">
    <property type="entry name" value="P-loop containing nucleotide triphosphate hydrolases"/>
    <property type="match status" value="1"/>
</dbReference>
<dbReference type="InterPro" id="IPR003593">
    <property type="entry name" value="AAA+_ATPase"/>
</dbReference>
<dbReference type="InterPro" id="IPR003439">
    <property type="entry name" value="ABC_transporter-like_ATP-bd"/>
</dbReference>
<dbReference type="InterPro" id="IPR017871">
    <property type="entry name" value="ABC_transporter-like_CS"/>
</dbReference>
<dbReference type="InterPro" id="IPR050166">
    <property type="entry name" value="ABC_transporter_ATP-bind"/>
</dbReference>
<dbReference type="InterPro" id="IPR027417">
    <property type="entry name" value="P-loop_NTPase"/>
</dbReference>
<dbReference type="NCBIfam" id="NF008420">
    <property type="entry name" value="PRK11247.1"/>
    <property type="match status" value="1"/>
</dbReference>
<dbReference type="PANTHER" id="PTHR42788:SF17">
    <property type="entry name" value="ALIPHATIC SULFONATES IMPORT ATP-BINDING PROTEIN SSUB"/>
    <property type="match status" value="1"/>
</dbReference>
<dbReference type="PANTHER" id="PTHR42788">
    <property type="entry name" value="TAURINE IMPORT ATP-BINDING PROTEIN-RELATED"/>
    <property type="match status" value="1"/>
</dbReference>
<dbReference type="Pfam" id="PF00005">
    <property type="entry name" value="ABC_tran"/>
    <property type="match status" value="1"/>
</dbReference>
<dbReference type="SMART" id="SM00382">
    <property type="entry name" value="AAA"/>
    <property type="match status" value="1"/>
</dbReference>
<dbReference type="SUPFAM" id="SSF52540">
    <property type="entry name" value="P-loop containing nucleoside triphosphate hydrolases"/>
    <property type="match status" value="1"/>
</dbReference>
<dbReference type="PROSITE" id="PS00211">
    <property type="entry name" value="ABC_TRANSPORTER_1"/>
    <property type="match status" value="1"/>
</dbReference>
<dbReference type="PROSITE" id="PS50893">
    <property type="entry name" value="ABC_TRANSPORTER_2"/>
    <property type="match status" value="1"/>
</dbReference>
<dbReference type="PROSITE" id="PS51291">
    <property type="entry name" value="SSUB"/>
    <property type="match status" value="1"/>
</dbReference>
<reference key="1">
    <citation type="journal article" date="2002" name="Nucleic Acids Res.">
        <title>Genome sequence of Shigella flexneri 2a: insights into pathogenicity through comparison with genomes of Escherichia coli K12 and O157.</title>
        <authorList>
            <person name="Jin Q."/>
            <person name="Yuan Z."/>
            <person name="Xu J."/>
            <person name="Wang Y."/>
            <person name="Shen Y."/>
            <person name="Lu W."/>
            <person name="Wang J."/>
            <person name="Liu H."/>
            <person name="Yang J."/>
            <person name="Yang F."/>
            <person name="Zhang X."/>
            <person name="Zhang J."/>
            <person name="Yang G."/>
            <person name="Wu H."/>
            <person name="Qu D."/>
            <person name="Dong J."/>
            <person name="Sun L."/>
            <person name="Xue Y."/>
            <person name="Zhao A."/>
            <person name="Gao Y."/>
            <person name="Zhu J."/>
            <person name="Kan B."/>
            <person name="Ding K."/>
            <person name="Chen S."/>
            <person name="Cheng H."/>
            <person name="Yao Z."/>
            <person name="He B."/>
            <person name="Chen R."/>
            <person name="Ma D."/>
            <person name="Qiang B."/>
            <person name="Wen Y."/>
            <person name="Hou Y."/>
            <person name="Yu J."/>
        </authorList>
    </citation>
    <scope>NUCLEOTIDE SEQUENCE [LARGE SCALE GENOMIC DNA]</scope>
    <source>
        <strain>301 / Serotype 2a</strain>
    </source>
</reference>
<reference key="2">
    <citation type="journal article" date="2003" name="Infect. Immun.">
        <title>Complete genome sequence and comparative genomics of Shigella flexneri serotype 2a strain 2457T.</title>
        <authorList>
            <person name="Wei J."/>
            <person name="Goldberg M.B."/>
            <person name="Burland V."/>
            <person name="Venkatesan M.M."/>
            <person name="Deng W."/>
            <person name="Fournier G."/>
            <person name="Mayhew G.F."/>
            <person name="Plunkett G. III"/>
            <person name="Rose D.J."/>
            <person name="Darling A."/>
            <person name="Mau B."/>
            <person name="Perna N.T."/>
            <person name="Payne S.M."/>
            <person name="Runyen-Janecky L.J."/>
            <person name="Zhou S."/>
            <person name="Schwartz D.C."/>
            <person name="Blattner F.R."/>
        </authorList>
    </citation>
    <scope>NUCLEOTIDE SEQUENCE [LARGE SCALE GENOMIC DNA]</scope>
    <source>
        <strain>ATCC 700930 / 2457T / Serotype 2a</strain>
    </source>
</reference>
<protein>
    <recommendedName>
        <fullName evidence="1">Aliphatic sulfonates import ATP-binding protein SsuB</fullName>
        <ecNumber evidence="1">7.6.2.14</ecNumber>
    </recommendedName>
</protein>
<sequence>MNTARLNQGTPLLLNAVSKHYAENIVLNQLDLHIPAGQFVAVVGRSGGGKSTLLHLLAGLETPTAGDVLAGTTPLAEIQDDTRMMFQDARLLPWKSVIDNVGLGLKGQWRDAARRALAAAGLENRAGEWPAALSGGQKQRVALARALIHRPGLLLLDEPLGALDALTRLEMQDLIVSLWQQHGFTVLLVTHDVSEAVAMADRVLLIEEGKISLDLTVDIPRPRRLGSVRLAELEAEVLQRVMRRGHSEQLIRRHG</sequence>
<evidence type="ECO:0000255" key="1">
    <source>
        <dbReference type="HAMAP-Rule" id="MF_01724"/>
    </source>
</evidence>
<comment type="function">
    <text evidence="1">Part of the ABC transporter complex SsuABC involved in aliphatic sulfonates import. Responsible for energy coupling to the transport system.</text>
</comment>
<comment type="catalytic activity">
    <reaction evidence="1">
        <text>ATP + H2O + aliphatic sulfonate-[sulfonate-binding protein]Side 1 = ADP + phosphate + aliphatic sulfonateSide 2 + [sulfonate-binding protein]Side 1.</text>
        <dbReference type="EC" id="7.6.2.14"/>
    </reaction>
</comment>
<comment type="subunit">
    <text evidence="1">The complex is composed of two ATP-binding proteins (SsuB), two transmembrane proteins (SsuC) and a solute-binding protein (SsuA).</text>
</comment>
<comment type="subcellular location">
    <subcellularLocation>
        <location evidence="1">Cell inner membrane</location>
        <topology evidence="1">Peripheral membrane protein</topology>
    </subcellularLocation>
</comment>
<comment type="similarity">
    <text evidence="1">Belongs to the ABC transporter superfamily. Aliphatic sulfonates importer (TC 3.A.1.17.2) family.</text>
</comment>
<proteinExistence type="inferred from homology"/>
<feature type="chain" id="PRO_0000279960" description="Aliphatic sulfonates import ATP-binding protein SsuB">
    <location>
        <begin position="1"/>
        <end position="255"/>
    </location>
</feature>
<feature type="domain" description="ABC transporter" evidence="1">
    <location>
        <begin position="12"/>
        <end position="233"/>
    </location>
</feature>
<feature type="binding site" evidence="1">
    <location>
        <begin position="44"/>
        <end position="51"/>
    </location>
    <ligand>
        <name>ATP</name>
        <dbReference type="ChEBI" id="CHEBI:30616"/>
    </ligand>
</feature>
<keyword id="KW-0067">ATP-binding</keyword>
<keyword id="KW-0997">Cell inner membrane</keyword>
<keyword id="KW-1003">Cell membrane</keyword>
<keyword id="KW-0472">Membrane</keyword>
<keyword id="KW-0547">Nucleotide-binding</keyword>
<keyword id="KW-1185">Reference proteome</keyword>
<keyword id="KW-1278">Translocase</keyword>
<keyword id="KW-0813">Transport</keyword>
<name>SSUB_SHIFL</name>